<protein>
    <recommendedName>
        <fullName evidence="1">Dihydroorotate dehydrogenase (quinone)</fullName>
        <ecNumber evidence="1">1.3.5.2</ecNumber>
    </recommendedName>
    <alternativeName>
        <fullName evidence="1">DHOdehase</fullName>
        <shortName evidence="1">DHOD</shortName>
        <shortName evidence="1">DHODase</shortName>
    </alternativeName>
    <alternativeName>
        <fullName evidence="1">Dihydroorotate oxidase</fullName>
    </alternativeName>
</protein>
<name>PYRD_SHESR</name>
<accession>Q0HVV6</accession>
<keyword id="KW-1003">Cell membrane</keyword>
<keyword id="KW-0285">Flavoprotein</keyword>
<keyword id="KW-0288">FMN</keyword>
<keyword id="KW-0472">Membrane</keyword>
<keyword id="KW-0560">Oxidoreductase</keyword>
<keyword id="KW-0665">Pyrimidine biosynthesis</keyword>
<evidence type="ECO:0000255" key="1">
    <source>
        <dbReference type="HAMAP-Rule" id="MF_00225"/>
    </source>
</evidence>
<gene>
    <name evidence="1" type="primary">pyrD</name>
    <name type="ordered locus">Shewmr7_1756</name>
</gene>
<proteinExistence type="inferred from homology"/>
<comment type="function">
    <text evidence="1">Catalyzes the conversion of dihydroorotate to orotate with quinone as electron acceptor.</text>
</comment>
<comment type="catalytic activity">
    <reaction evidence="1">
        <text>(S)-dihydroorotate + a quinone = orotate + a quinol</text>
        <dbReference type="Rhea" id="RHEA:30187"/>
        <dbReference type="ChEBI" id="CHEBI:24646"/>
        <dbReference type="ChEBI" id="CHEBI:30839"/>
        <dbReference type="ChEBI" id="CHEBI:30864"/>
        <dbReference type="ChEBI" id="CHEBI:132124"/>
        <dbReference type="EC" id="1.3.5.2"/>
    </reaction>
</comment>
<comment type="cofactor">
    <cofactor evidence="1">
        <name>FMN</name>
        <dbReference type="ChEBI" id="CHEBI:58210"/>
    </cofactor>
    <text evidence="1">Binds 1 FMN per subunit.</text>
</comment>
<comment type="pathway">
    <text evidence="1">Pyrimidine metabolism; UMP biosynthesis via de novo pathway; orotate from (S)-dihydroorotate (quinone route): step 1/1.</text>
</comment>
<comment type="subunit">
    <text evidence="1">Monomer.</text>
</comment>
<comment type="subcellular location">
    <subcellularLocation>
        <location evidence="1">Cell membrane</location>
        <topology evidence="1">Peripheral membrane protein</topology>
    </subcellularLocation>
</comment>
<comment type="similarity">
    <text evidence="1">Belongs to the dihydroorotate dehydrogenase family. Type 2 subfamily.</text>
</comment>
<dbReference type="EC" id="1.3.5.2" evidence="1"/>
<dbReference type="EMBL" id="CP000444">
    <property type="protein sequence ID" value="ABI42749.1"/>
    <property type="molecule type" value="Genomic_DNA"/>
</dbReference>
<dbReference type="SMR" id="Q0HVV6"/>
<dbReference type="KEGG" id="shm:Shewmr7_1756"/>
<dbReference type="HOGENOM" id="CLU_013640_2_0_6"/>
<dbReference type="UniPathway" id="UPA00070">
    <property type="reaction ID" value="UER00946"/>
</dbReference>
<dbReference type="GO" id="GO:0005737">
    <property type="term" value="C:cytoplasm"/>
    <property type="evidence" value="ECO:0007669"/>
    <property type="project" value="InterPro"/>
</dbReference>
<dbReference type="GO" id="GO:0005886">
    <property type="term" value="C:plasma membrane"/>
    <property type="evidence" value="ECO:0007669"/>
    <property type="project" value="UniProtKB-SubCell"/>
</dbReference>
<dbReference type="GO" id="GO:0106430">
    <property type="term" value="F:dihydroorotate dehydrogenase (quinone) activity"/>
    <property type="evidence" value="ECO:0007669"/>
    <property type="project" value="UniProtKB-EC"/>
</dbReference>
<dbReference type="GO" id="GO:0006207">
    <property type="term" value="P:'de novo' pyrimidine nucleobase biosynthetic process"/>
    <property type="evidence" value="ECO:0007669"/>
    <property type="project" value="InterPro"/>
</dbReference>
<dbReference type="GO" id="GO:0044205">
    <property type="term" value="P:'de novo' UMP biosynthetic process"/>
    <property type="evidence" value="ECO:0007669"/>
    <property type="project" value="UniProtKB-UniRule"/>
</dbReference>
<dbReference type="CDD" id="cd04738">
    <property type="entry name" value="DHOD_2_like"/>
    <property type="match status" value="1"/>
</dbReference>
<dbReference type="FunFam" id="3.20.20.70:FF:000028">
    <property type="entry name" value="Dihydroorotate dehydrogenase (quinone)"/>
    <property type="match status" value="1"/>
</dbReference>
<dbReference type="Gene3D" id="3.20.20.70">
    <property type="entry name" value="Aldolase class I"/>
    <property type="match status" value="1"/>
</dbReference>
<dbReference type="HAMAP" id="MF_00225">
    <property type="entry name" value="DHO_dh_type2"/>
    <property type="match status" value="1"/>
</dbReference>
<dbReference type="InterPro" id="IPR013785">
    <property type="entry name" value="Aldolase_TIM"/>
</dbReference>
<dbReference type="InterPro" id="IPR050074">
    <property type="entry name" value="DHO_dehydrogenase"/>
</dbReference>
<dbReference type="InterPro" id="IPR012135">
    <property type="entry name" value="Dihydroorotate_DH_1_2"/>
</dbReference>
<dbReference type="InterPro" id="IPR005719">
    <property type="entry name" value="Dihydroorotate_DH_2"/>
</dbReference>
<dbReference type="InterPro" id="IPR005720">
    <property type="entry name" value="Dihydroorotate_DH_cat"/>
</dbReference>
<dbReference type="InterPro" id="IPR001295">
    <property type="entry name" value="Dihydroorotate_DH_CS"/>
</dbReference>
<dbReference type="NCBIfam" id="NF003644">
    <property type="entry name" value="PRK05286.1-1"/>
    <property type="match status" value="1"/>
</dbReference>
<dbReference type="NCBIfam" id="NF003645">
    <property type="entry name" value="PRK05286.1-2"/>
    <property type="match status" value="1"/>
</dbReference>
<dbReference type="NCBIfam" id="NF003646">
    <property type="entry name" value="PRK05286.1-4"/>
    <property type="match status" value="1"/>
</dbReference>
<dbReference type="NCBIfam" id="NF003652">
    <property type="entry name" value="PRK05286.2-5"/>
    <property type="match status" value="1"/>
</dbReference>
<dbReference type="NCBIfam" id="TIGR01036">
    <property type="entry name" value="pyrD_sub2"/>
    <property type="match status" value="1"/>
</dbReference>
<dbReference type="PANTHER" id="PTHR48109:SF4">
    <property type="entry name" value="DIHYDROOROTATE DEHYDROGENASE (QUINONE), MITOCHONDRIAL"/>
    <property type="match status" value="1"/>
</dbReference>
<dbReference type="PANTHER" id="PTHR48109">
    <property type="entry name" value="DIHYDROOROTATE DEHYDROGENASE (QUINONE), MITOCHONDRIAL-RELATED"/>
    <property type="match status" value="1"/>
</dbReference>
<dbReference type="Pfam" id="PF01180">
    <property type="entry name" value="DHO_dh"/>
    <property type="match status" value="1"/>
</dbReference>
<dbReference type="PIRSF" id="PIRSF000164">
    <property type="entry name" value="DHO_oxidase"/>
    <property type="match status" value="1"/>
</dbReference>
<dbReference type="SUPFAM" id="SSF51395">
    <property type="entry name" value="FMN-linked oxidoreductases"/>
    <property type="match status" value="1"/>
</dbReference>
<dbReference type="PROSITE" id="PS00911">
    <property type="entry name" value="DHODEHASE_1"/>
    <property type="match status" value="1"/>
</dbReference>
<dbReference type="PROSITE" id="PS00912">
    <property type="entry name" value="DHODEHASE_2"/>
    <property type="match status" value="1"/>
</dbReference>
<sequence>MFYKIAQKVMFQMDPERAHNLAIGSLKMTGNSPLNAFYAQNIAPAPVSFMGLTFPNPVGLAAGMDKDGESIDAFHAMGFGHVEVGTVTPRPQPGNDLPRLFRLKPAKAIINRMGFNNKGVDNLVKNLIAKKTDIMVGVNIGKNKDTPVEQGKDDYLICMDKVYPYAAYIAVNISSPNTPGLRSLQYGDLLDELLSALKTKQLELAEKHKKYVPIALKIAPDLTTEEIENIAQSLIKNKFDGAIATNTTLTRDGVSGLANANESGGLSGKPLTELSTKVIKQLATCLNGQIPIIGVGGINSAEDALAKFDAGATMVQIYSGFIYQGPKLIKEIVEAYRLK</sequence>
<reference key="1">
    <citation type="submission" date="2006-08" db="EMBL/GenBank/DDBJ databases">
        <title>Complete sequence of chromosome 1 of Shewanella sp. MR-7.</title>
        <authorList>
            <person name="Copeland A."/>
            <person name="Lucas S."/>
            <person name="Lapidus A."/>
            <person name="Barry K."/>
            <person name="Detter J.C."/>
            <person name="Glavina del Rio T."/>
            <person name="Hammon N."/>
            <person name="Israni S."/>
            <person name="Dalin E."/>
            <person name="Tice H."/>
            <person name="Pitluck S."/>
            <person name="Kiss H."/>
            <person name="Brettin T."/>
            <person name="Bruce D."/>
            <person name="Han C."/>
            <person name="Tapia R."/>
            <person name="Gilna P."/>
            <person name="Schmutz J."/>
            <person name="Larimer F."/>
            <person name="Land M."/>
            <person name="Hauser L."/>
            <person name="Kyrpides N."/>
            <person name="Mikhailova N."/>
            <person name="Nealson K."/>
            <person name="Konstantinidis K."/>
            <person name="Klappenbach J."/>
            <person name="Tiedje J."/>
            <person name="Richardson P."/>
        </authorList>
    </citation>
    <scope>NUCLEOTIDE SEQUENCE [LARGE SCALE GENOMIC DNA]</scope>
    <source>
        <strain>MR-7</strain>
    </source>
</reference>
<organism>
    <name type="scientific">Shewanella sp. (strain MR-7)</name>
    <dbReference type="NCBI Taxonomy" id="60481"/>
    <lineage>
        <taxon>Bacteria</taxon>
        <taxon>Pseudomonadati</taxon>
        <taxon>Pseudomonadota</taxon>
        <taxon>Gammaproteobacteria</taxon>
        <taxon>Alteromonadales</taxon>
        <taxon>Shewanellaceae</taxon>
        <taxon>Shewanella</taxon>
    </lineage>
</organism>
<feature type="chain" id="PRO_1000024228" description="Dihydroorotate dehydrogenase (quinone)">
    <location>
        <begin position="1"/>
        <end position="339"/>
    </location>
</feature>
<feature type="active site" description="Nucleophile" evidence="1">
    <location>
        <position position="175"/>
    </location>
</feature>
<feature type="binding site" evidence="1">
    <location>
        <begin position="62"/>
        <end position="66"/>
    </location>
    <ligand>
        <name>FMN</name>
        <dbReference type="ChEBI" id="CHEBI:58210"/>
    </ligand>
</feature>
<feature type="binding site" evidence="1">
    <location>
        <position position="66"/>
    </location>
    <ligand>
        <name>substrate</name>
    </ligand>
</feature>
<feature type="binding site" evidence="1">
    <location>
        <position position="86"/>
    </location>
    <ligand>
        <name>FMN</name>
        <dbReference type="ChEBI" id="CHEBI:58210"/>
    </ligand>
</feature>
<feature type="binding site" evidence="1">
    <location>
        <begin position="111"/>
        <end position="115"/>
    </location>
    <ligand>
        <name>substrate</name>
    </ligand>
</feature>
<feature type="binding site" evidence="1">
    <location>
        <position position="139"/>
    </location>
    <ligand>
        <name>FMN</name>
        <dbReference type="ChEBI" id="CHEBI:58210"/>
    </ligand>
</feature>
<feature type="binding site" evidence="1">
    <location>
        <position position="172"/>
    </location>
    <ligand>
        <name>FMN</name>
        <dbReference type="ChEBI" id="CHEBI:58210"/>
    </ligand>
</feature>
<feature type="binding site" evidence="1">
    <location>
        <position position="172"/>
    </location>
    <ligand>
        <name>substrate</name>
    </ligand>
</feature>
<feature type="binding site" evidence="1">
    <location>
        <position position="177"/>
    </location>
    <ligand>
        <name>substrate</name>
    </ligand>
</feature>
<feature type="binding site" evidence="1">
    <location>
        <position position="217"/>
    </location>
    <ligand>
        <name>FMN</name>
        <dbReference type="ChEBI" id="CHEBI:58210"/>
    </ligand>
</feature>
<feature type="binding site" evidence="1">
    <location>
        <position position="245"/>
    </location>
    <ligand>
        <name>FMN</name>
        <dbReference type="ChEBI" id="CHEBI:58210"/>
    </ligand>
</feature>
<feature type="binding site" evidence="1">
    <location>
        <begin position="246"/>
        <end position="247"/>
    </location>
    <ligand>
        <name>substrate</name>
    </ligand>
</feature>
<feature type="binding site" evidence="1">
    <location>
        <position position="268"/>
    </location>
    <ligand>
        <name>FMN</name>
        <dbReference type="ChEBI" id="CHEBI:58210"/>
    </ligand>
</feature>
<feature type="binding site" evidence="1">
    <location>
        <position position="297"/>
    </location>
    <ligand>
        <name>FMN</name>
        <dbReference type="ChEBI" id="CHEBI:58210"/>
    </ligand>
</feature>
<feature type="binding site" evidence="1">
    <location>
        <begin position="318"/>
        <end position="319"/>
    </location>
    <ligand>
        <name>FMN</name>
        <dbReference type="ChEBI" id="CHEBI:58210"/>
    </ligand>
</feature>